<proteinExistence type="inferred from homology"/>
<name>CLPX_SPHAL</name>
<feature type="chain" id="PRO_1000024668" description="ATP-dependent Clp protease ATP-binding subunit ClpX">
    <location>
        <begin position="1"/>
        <end position="423"/>
    </location>
</feature>
<feature type="domain" description="ClpX-type ZB" evidence="2">
    <location>
        <begin position="3"/>
        <end position="56"/>
    </location>
</feature>
<feature type="binding site" evidence="2">
    <location>
        <position position="15"/>
    </location>
    <ligand>
        <name>Zn(2+)</name>
        <dbReference type="ChEBI" id="CHEBI:29105"/>
    </ligand>
</feature>
<feature type="binding site" evidence="2">
    <location>
        <position position="18"/>
    </location>
    <ligand>
        <name>Zn(2+)</name>
        <dbReference type="ChEBI" id="CHEBI:29105"/>
    </ligand>
</feature>
<feature type="binding site" evidence="2">
    <location>
        <position position="37"/>
    </location>
    <ligand>
        <name>Zn(2+)</name>
        <dbReference type="ChEBI" id="CHEBI:29105"/>
    </ligand>
</feature>
<feature type="binding site" evidence="2">
    <location>
        <position position="40"/>
    </location>
    <ligand>
        <name>Zn(2+)</name>
        <dbReference type="ChEBI" id="CHEBI:29105"/>
    </ligand>
</feature>
<feature type="binding site" evidence="1">
    <location>
        <begin position="120"/>
        <end position="127"/>
    </location>
    <ligand>
        <name>ATP</name>
        <dbReference type="ChEBI" id="CHEBI:30616"/>
    </ligand>
</feature>
<protein>
    <recommendedName>
        <fullName evidence="1">ATP-dependent Clp protease ATP-binding subunit ClpX</fullName>
    </recommendedName>
</protein>
<evidence type="ECO:0000255" key="1">
    <source>
        <dbReference type="HAMAP-Rule" id="MF_00175"/>
    </source>
</evidence>
<evidence type="ECO:0000255" key="2">
    <source>
        <dbReference type="PROSITE-ProRule" id="PRU01250"/>
    </source>
</evidence>
<comment type="function">
    <text evidence="1">ATP-dependent specificity component of the Clp protease. It directs the protease to specific substrates. Can perform chaperone functions in the absence of ClpP.</text>
</comment>
<comment type="subunit">
    <text evidence="1">Component of the ClpX-ClpP complex. Forms a hexameric ring that, in the presence of ATP, binds to fourteen ClpP subunits assembled into a disk-like structure with a central cavity, resembling the structure of eukaryotic proteasomes.</text>
</comment>
<comment type="similarity">
    <text evidence="1">Belongs to the ClpX chaperone family.</text>
</comment>
<dbReference type="EMBL" id="CP000356">
    <property type="protein sequence ID" value="ABF54448.1"/>
    <property type="molecule type" value="Genomic_DNA"/>
</dbReference>
<dbReference type="RefSeq" id="WP_011543013.1">
    <property type="nucleotide sequence ID" value="NC_008048.1"/>
</dbReference>
<dbReference type="SMR" id="Q1GPH4"/>
<dbReference type="STRING" id="317655.Sala_2743"/>
<dbReference type="KEGG" id="sal:Sala_2743"/>
<dbReference type="eggNOG" id="COG1219">
    <property type="taxonomic scope" value="Bacteria"/>
</dbReference>
<dbReference type="HOGENOM" id="CLU_014218_8_2_5"/>
<dbReference type="OrthoDB" id="9804062at2"/>
<dbReference type="Proteomes" id="UP000006578">
    <property type="component" value="Chromosome"/>
</dbReference>
<dbReference type="GO" id="GO:0009376">
    <property type="term" value="C:HslUV protease complex"/>
    <property type="evidence" value="ECO:0007669"/>
    <property type="project" value="TreeGrafter"/>
</dbReference>
<dbReference type="GO" id="GO:0005524">
    <property type="term" value="F:ATP binding"/>
    <property type="evidence" value="ECO:0007669"/>
    <property type="project" value="UniProtKB-UniRule"/>
</dbReference>
<dbReference type="GO" id="GO:0016887">
    <property type="term" value="F:ATP hydrolysis activity"/>
    <property type="evidence" value="ECO:0007669"/>
    <property type="project" value="InterPro"/>
</dbReference>
<dbReference type="GO" id="GO:0140662">
    <property type="term" value="F:ATP-dependent protein folding chaperone"/>
    <property type="evidence" value="ECO:0007669"/>
    <property type="project" value="InterPro"/>
</dbReference>
<dbReference type="GO" id="GO:0046983">
    <property type="term" value="F:protein dimerization activity"/>
    <property type="evidence" value="ECO:0007669"/>
    <property type="project" value="InterPro"/>
</dbReference>
<dbReference type="GO" id="GO:0051082">
    <property type="term" value="F:unfolded protein binding"/>
    <property type="evidence" value="ECO:0007669"/>
    <property type="project" value="UniProtKB-UniRule"/>
</dbReference>
<dbReference type="GO" id="GO:0008270">
    <property type="term" value="F:zinc ion binding"/>
    <property type="evidence" value="ECO:0007669"/>
    <property type="project" value="InterPro"/>
</dbReference>
<dbReference type="GO" id="GO:0051301">
    <property type="term" value="P:cell division"/>
    <property type="evidence" value="ECO:0007669"/>
    <property type="project" value="TreeGrafter"/>
</dbReference>
<dbReference type="GO" id="GO:0051603">
    <property type="term" value="P:proteolysis involved in protein catabolic process"/>
    <property type="evidence" value="ECO:0007669"/>
    <property type="project" value="TreeGrafter"/>
</dbReference>
<dbReference type="CDD" id="cd19497">
    <property type="entry name" value="RecA-like_ClpX"/>
    <property type="match status" value="1"/>
</dbReference>
<dbReference type="FunFam" id="1.10.8.60:FF:000002">
    <property type="entry name" value="ATP-dependent Clp protease ATP-binding subunit ClpX"/>
    <property type="match status" value="1"/>
</dbReference>
<dbReference type="FunFam" id="3.40.50.300:FF:000005">
    <property type="entry name" value="ATP-dependent Clp protease ATP-binding subunit ClpX"/>
    <property type="match status" value="1"/>
</dbReference>
<dbReference type="Gene3D" id="1.10.8.60">
    <property type="match status" value="1"/>
</dbReference>
<dbReference type="Gene3D" id="6.20.220.10">
    <property type="entry name" value="ClpX chaperone, C4-type zinc finger domain"/>
    <property type="match status" value="1"/>
</dbReference>
<dbReference type="Gene3D" id="3.40.50.300">
    <property type="entry name" value="P-loop containing nucleotide triphosphate hydrolases"/>
    <property type="match status" value="1"/>
</dbReference>
<dbReference type="HAMAP" id="MF_00175">
    <property type="entry name" value="ClpX"/>
    <property type="match status" value="1"/>
</dbReference>
<dbReference type="InterPro" id="IPR003593">
    <property type="entry name" value="AAA+_ATPase"/>
</dbReference>
<dbReference type="InterPro" id="IPR050052">
    <property type="entry name" value="ATP-dep_Clp_protease_ClpX"/>
</dbReference>
<dbReference type="InterPro" id="IPR003959">
    <property type="entry name" value="ATPase_AAA_core"/>
</dbReference>
<dbReference type="InterPro" id="IPR019489">
    <property type="entry name" value="Clp_ATPase_C"/>
</dbReference>
<dbReference type="InterPro" id="IPR004487">
    <property type="entry name" value="Clp_protease_ATP-bd_su_ClpX"/>
</dbReference>
<dbReference type="InterPro" id="IPR046425">
    <property type="entry name" value="ClpX_bact"/>
</dbReference>
<dbReference type="InterPro" id="IPR027417">
    <property type="entry name" value="P-loop_NTPase"/>
</dbReference>
<dbReference type="InterPro" id="IPR010603">
    <property type="entry name" value="Znf_CppX_C4"/>
</dbReference>
<dbReference type="InterPro" id="IPR038366">
    <property type="entry name" value="Znf_CppX_C4_sf"/>
</dbReference>
<dbReference type="NCBIfam" id="TIGR00382">
    <property type="entry name" value="clpX"/>
    <property type="match status" value="1"/>
</dbReference>
<dbReference type="NCBIfam" id="NF003745">
    <property type="entry name" value="PRK05342.1"/>
    <property type="match status" value="1"/>
</dbReference>
<dbReference type="PANTHER" id="PTHR48102:SF7">
    <property type="entry name" value="ATP-DEPENDENT CLP PROTEASE ATP-BINDING SUBUNIT CLPX-LIKE, MITOCHONDRIAL"/>
    <property type="match status" value="1"/>
</dbReference>
<dbReference type="PANTHER" id="PTHR48102">
    <property type="entry name" value="ATP-DEPENDENT CLP PROTEASE ATP-BINDING SUBUNIT CLPX-LIKE, MITOCHONDRIAL-RELATED"/>
    <property type="match status" value="1"/>
</dbReference>
<dbReference type="Pfam" id="PF07724">
    <property type="entry name" value="AAA_2"/>
    <property type="match status" value="1"/>
</dbReference>
<dbReference type="Pfam" id="PF10431">
    <property type="entry name" value="ClpB_D2-small"/>
    <property type="match status" value="1"/>
</dbReference>
<dbReference type="Pfam" id="PF06689">
    <property type="entry name" value="zf-C4_ClpX"/>
    <property type="match status" value="1"/>
</dbReference>
<dbReference type="SMART" id="SM00382">
    <property type="entry name" value="AAA"/>
    <property type="match status" value="1"/>
</dbReference>
<dbReference type="SMART" id="SM01086">
    <property type="entry name" value="ClpB_D2-small"/>
    <property type="match status" value="1"/>
</dbReference>
<dbReference type="SMART" id="SM00994">
    <property type="entry name" value="zf-C4_ClpX"/>
    <property type="match status" value="1"/>
</dbReference>
<dbReference type="SUPFAM" id="SSF57716">
    <property type="entry name" value="Glucocorticoid receptor-like (DNA-binding domain)"/>
    <property type="match status" value="1"/>
</dbReference>
<dbReference type="SUPFAM" id="SSF52540">
    <property type="entry name" value="P-loop containing nucleoside triphosphate hydrolases"/>
    <property type="match status" value="1"/>
</dbReference>
<dbReference type="PROSITE" id="PS51902">
    <property type="entry name" value="CLPX_ZB"/>
    <property type="match status" value="1"/>
</dbReference>
<accession>Q1GPH4</accession>
<sequence length="423" mass="45804">MTKLSGSDSKSTLYCSFCGKSQHEVRKLIAGPTVFICDECVELCNDIIREEIKGGVAARKDGAVPTPLEICQHLDAYVIGQNKAKRVLSVAVHNHYKRLANSGRGEDVELAKSNILLVGPTGSGKTLLAQTLARFLDVPFTMADATTLTEAGYVGEDVENIILKLLQSSDYNVEKAQRGIVYIDEIDKISRKAENPSITRDVSGEGVQQALLKLMEGTTASVPPQGGRKHPQQEFLQVDTTNILFIAGGAFAGLEKIIGDRLQGKSIGFGAHVAGPDERRAGEVLKQIEPEDLLKFGLIPEFVGRLPVIATLEDLDVDALVKILGEPKNALVKQYKKLFDLEEVALTFTDDALVAVAKKAIERKTGARGLRSIVEAILLDTMFDLPDLTDVVEIVVDKDVVEGRKDPVRVYADKAKEAAGDAA</sequence>
<organism>
    <name type="scientific">Sphingopyxis alaskensis (strain DSM 13593 / LMG 18877 / RB2256)</name>
    <name type="common">Sphingomonas alaskensis</name>
    <dbReference type="NCBI Taxonomy" id="317655"/>
    <lineage>
        <taxon>Bacteria</taxon>
        <taxon>Pseudomonadati</taxon>
        <taxon>Pseudomonadota</taxon>
        <taxon>Alphaproteobacteria</taxon>
        <taxon>Sphingomonadales</taxon>
        <taxon>Sphingomonadaceae</taxon>
        <taxon>Sphingopyxis</taxon>
    </lineage>
</organism>
<gene>
    <name evidence="1" type="primary">clpX</name>
    <name type="ordered locus">Sala_2743</name>
</gene>
<reference key="1">
    <citation type="journal article" date="2009" name="Proc. Natl. Acad. Sci. U.S.A.">
        <title>The genomic basis of trophic strategy in marine bacteria.</title>
        <authorList>
            <person name="Lauro F.M."/>
            <person name="McDougald D."/>
            <person name="Thomas T."/>
            <person name="Williams T.J."/>
            <person name="Egan S."/>
            <person name="Rice S."/>
            <person name="DeMaere M.Z."/>
            <person name="Ting L."/>
            <person name="Ertan H."/>
            <person name="Johnson J."/>
            <person name="Ferriera S."/>
            <person name="Lapidus A."/>
            <person name="Anderson I."/>
            <person name="Kyrpides N."/>
            <person name="Munk A.C."/>
            <person name="Detter C."/>
            <person name="Han C.S."/>
            <person name="Brown M.V."/>
            <person name="Robb F.T."/>
            <person name="Kjelleberg S."/>
            <person name="Cavicchioli R."/>
        </authorList>
    </citation>
    <scope>NUCLEOTIDE SEQUENCE [LARGE SCALE GENOMIC DNA]</scope>
    <source>
        <strain>DSM 13593 / LMG 18877 / RB2256</strain>
    </source>
</reference>
<keyword id="KW-0067">ATP-binding</keyword>
<keyword id="KW-0143">Chaperone</keyword>
<keyword id="KW-0479">Metal-binding</keyword>
<keyword id="KW-0547">Nucleotide-binding</keyword>
<keyword id="KW-1185">Reference proteome</keyword>
<keyword id="KW-0862">Zinc</keyword>